<gene>
    <name evidence="1" type="primary">fusA</name>
    <name type="ordered locus">SSU05_0152</name>
</gene>
<dbReference type="EMBL" id="CP000407">
    <property type="protein sequence ID" value="ABP89122.1"/>
    <property type="molecule type" value="Genomic_DNA"/>
</dbReference>
<dbReference type="SMR" id="A4VSN3"/>
<dbReference type="STRING" id="391295.SSU05_0152"/>
<dbReference type="KEGG" id="ssu:SSU05_0152"/>
<dbReference type="eggNOG" id="COG0480">
    <property type="taxonomic scope" value="Bacteria"/>
</dbReference>
<dbReference type="HOGENOM" id="CLU_002794_4_1_9"/>
<dbReference type="GO" id="GO:0005737">
    <property type="term" value="C:cytoplasm"/>
    <property type="evidence" value="ECO:0007669"/>
    <property type="project" value="UniProtKB-SubCell"/>
</dbReference>
<dbReference type="GO" id="GO:0005525">
    <property type="term" value="F:GTP binding"/>
    <property type="evidence" value="ECO:0007669"/>
    <property type="project" value="UniProtKB-UniRule"/>
</dbReference>
<dbReference type="GO" id="GO:0003924">
    <property type="term" value="F:GTPase activity"/>
    <property type="evidence" value="ECO:0007669"/>
    <property type="project" value="InterPro"/>
</dbReference>
<dbReference type="GO" id="GO:0003746">
    <property type="term" value="F:translation elongation factor activity"/>
    <property type="evidence" value="ECO:0007669"/>
    <property type="project" value="UniProtKB-UniRule"/>
</dbReference>
<dbReference type="GO" id="GO:0032790">
    <property type="term" value="P:ribosome disassembly"/>
    <property type="evidence" value="ECO:0007669"/>
    <property type="project" value="TreeGrafter"/>
</dbReference>
<dbReference type="CDD" id="cd01886">
    <property type="entry name" value="EF-G"/>
    <property type="match status" value="1"/>
</dbReference>
<dbReference type="CDD" id="cd16262">
    <property type="entry name" value="EFG_III"/>
    <property type="match status" value="1"/>
</dbReference>
<dbReference type="CDD" id="cd01434">
    <property type="entry name" value="EFG_mtEFG1_IV"/>
    <property type="match status" value="1"/>
</dbReference>
<dbReference type="CDD" id="cd03713">
    <property type="entry name" value="EFG_mtEFG_C"/>
    <property type="match status" value="1"/>
</dbReference>
<dbReference type="CDD" id="cd04088">
    <property type="entry name" value="EFG_mtEFG_II"/>
    <property type="match status" value="1"/>
</dbReference>
<dbReference type="FunFam" id="2.40.30.10:FF:000006">
    <property type="entry name" value="Elongation factor G"/>
    <property type="match status" value="1"/>
</dbReference>
<dbReference type="FunFam" id="3.30.230.10:FF:000003">
    <property type="entry name" value="Elongation factor G"/>
    <property type="match status" value="1"/>
</dbReference>
<dbReference type="FunFam" id="3.30.70.240:FF:000001">
    <property type="entry name" value="Elongation factor G"/>
    <property type="match status" value="1"/>
</dbReference>
<dbReference type="FunFam" id="3.30.70.870:FF:000001">
    <property type="entry name" value="Elongation factor G"/>
    <property type="match status" value="1"/>
</dbReference>
<dbReference type="FunFam" id="3.40.50.300:FF:000029">
    <property type="entry name" value="Elongation factor G"/>
    <property type="match status" value="1"/>
</dbReference>
<dbReference type="Gene3D" id="3.30.230.10">
    <property type="match status" value="1"/>
</dbReference>
<dbReference type="Gene3D" id="3.30.70.240">
    <property type="match status" value="1"/>
</dbReference>
<dbReference type="Gene3D" id="3.30.70.870">
    <property type="entry name" value="Elongation Factor G (Translational Gtpase), domain 3"/>
    <property type="match status" value="1"/>
</dbReference>
<dbReference type="Gene3D" id="3.40.50.300">
    <property type="entry name" value="P-loop containing nucleotide triphosphate hydrolases"/>
    <property type="match status" value="1"/>
</dbReference>
<dbReference type="Gene3D" id="2.40.30.10">
    <property type="entry name" value="Translation factors"/>
    <property type="match status" value="1"/>
</dbReference>
<dbReference type="HAMAP" id="MF_00054_B">
    <property type="entry name" value="EF_G_EF_2_B"/>
    <property type="match status" value="1"/>
</dbReference>
<dbReference type="InterPro" id="IPR041095">
    <property type="entry name" value="EFG_II"/>
</dbReference>
<dbReference type="InterPro" id="IPR009022">
    <property type="entry name" value="EFG_III"/>
</dbReference>
<dbReference type="InterPro" id="IPR035647">
    <property type="entry name" value="EFG_III/V"/>
</dbReference>
<dbReference type="InterPro" id="IPR047872">
    <property type="entry name" value="EFG_IV"/>
</dbReference>
<dbReference type="InterPro" id="IPR035649">
    <property type="entry name" value="EFG_V"/>
</dbReference>
<dbReference type="InterPro" id="IPR000640">
    <property type="entry name" value="EFG_V-like"/>
</dbReference>
<dbReference type="InterPro" id="IPR004161">
    <property type="entry name" value="EFTu-like_2"/>
</dbReference>
<dbReference type="InterPro" id="IPR031157">
    <property type="entry name" value="G_TR_CS"/>
</dbReference>
<dbReference type="InterPro" id="IPR027417">
    <property type="entry name" value="P-loop_NTPase"/>
</dbReference>
<dbReference type="InterPro" id="IPR020568">
    <property type="entry name" value="Ribosomal_Su5_D2-typ_SF"/>
</dbReference>
<dbReference type="InterPro" id="IPR014721">
    <property type="entry name" value="Ribsml_uS5_D2-typ_fold_subgr"/>
</dbReference>
<dbReference type="InterPro" id="IPR005225">
    <property type="entry name" value="Small_GTP-bd"/>
</dbReference>
<dbReference type="InterPro" id="IPR000795">
    <property type="entry name" value="T_Tr_GTP-bd_dom"/>
</dbReference>
<dbReference type="InterPro" id="IPR009000">
    <property type="entry name" value="Transl_B-barrel_sf"/>
</dbReference>
<dbReference type="InterPro" id="IPR004540">
    <property type="entry name" value="Transl_elong_EFG/EF2"/>
</dbReference>
<dbReference type="InterPro" id="IPR005517">
    <property type="entry name" value="Transl_elong_EFG/EF2_IV"/>
</dbReference>
<dbReference type="NCBIfam" id="TIGR00484">
    <property type="entry name" value="EF-G"/>
    <property type="match status" value="1"/>
</dbReference>
<dbReference type="NCBIfam" id="NF009379">
    <property type="entry name" value="PRK12740.1-3"/>
    <property type="match status" value="1"/>
</dbReference>
<dbReference type="NCBIfam" id="NF009381">
    <property type="entry name" value="PRK12740.1-5"/>
    <property type="match status" value="1"/>
</dbReference>
<dbReference type="NCBIfam" id="TIGR00231">
    <property type="entry name" value="small_GTP"/>
    <property type="match status" value="1"/>
</dbReference>
<dbReference type="PANTHER" id="PTHR43261:SF1">
    <property type="entry name" value="RIBOSOME-RELEASING FACTOR 2, MITOCHONDRIAL"/>
    <property type="match status" value="1"/>
</dbReference>
<dbReference type="PANTHER" id="PTHR43261">
    <property type="entry name" value="TRANSLATION ELONGATION FACTOR G-RELATED"/>
    <property type="match status" value="1"/>
</dbReference>
<dbReference type="Pfam" id="PF00679">
    <property type="entry name" value="EFG_C"/>
    <property type="match status" value="1"/>
</dbReference>
<dbReference type="Pfam" id="PF14492">
    <property type="entry name" value="EFG_III"/>
    <property type="match status" value="1"/>
</dbReference>
<dbReference type="Pfam" id="PF03764">
    <property type="entry name" value="EFG_IV"/>
    <property type="match status" value="1"/>
</dbReference>
<dbReference type="Pfam" id="PF00009">
    <property type="entry name" value="GTP_EFTU"/>
    <property type="match status" value="1"/>
</dbReference>
<dbReference type="Pfam" id="PF03144">
    <property type="entry name" value="GTP_EFTU_D2"/>
    <property type="match status" value="1"/>
</dbReference>
<dbReference type="PRINTS" id="PR00315">
    <property type="entry name" value="ELONGATNFCT"/>
</dbReference>
<dbReference type="SMART" id="SM00838">
    <property type="entry name" value="EFG_C"/>
    <property type="match status" value="1"/>
</dbReference>
<dbReference type="SMART" id="SM00889">
    <property type="entry name" value="EFG_IV"/>
    <property type="match status" value="1"/>
</dbReference>
<dbReference type="SUPFAM" id="SSF54980">
    <property type="entry name" value="EF-G C-terminal domain-like"/>
    <property type="match status" value="2"/>
</dbReference>
<dbReference type="SUPFAM" id="SSF52540">
    <property type="entry name" value="P-loop containing nucleoside triphosphate hydrolases"/>
    <property type="match status" value="1"/>
</dbReference>
<dbReference type="SUPFAM" id="SSF54211">
    <property type="entry name" value="Ribosomal protein S5 domain 2-like"/>
    <property type="match status" value="1"/>
</dbReference>
<dbReference type="SUPFAM" id="SSF50447">
    <property type="entry name" value="Translation proteins"/>
    <property type="match status" value="1"/>
</dbReference>
<dbReference type="PROSITE" id="PS00301">
    <property type="entry name" value="G_TR_1"/>
    <property type="match status" value="1"/>
</dbReference>
<dbReference type="PROSITE" id="PS51722">
    <property type="entry name" value="G_TR_2"/>
    <property type="match status" value="1"/>
</dbReference>
<feature type="chain" id="PRO_1000008891" description="Elongation factor G">
    <location>
        <begin position="1"/>
        <end position="693"/>
    </location>
</feature>
<feature type="domain" description="tr-type G">
    <location>
        <begin position="8"/>
        <end position="282"/>
    </location>
</feature>
<feature type="binding site" evidence="1">
    <location>
        <begin position="17"/>
        <end position="24"/>
    </location>
    <ligand>
        <name>GTP</name>
        <dbReference type="ChEBI" id="CHEBI:37565"/>
    </ligand>
</feature>
<feature type="binding site" evidence="1">
    <location>
        <begin position="81"/>
        <end position="85"/>
    </location>
    <ligand>
        <name>GTP</name>
        <dbReference type="ChEBI" id="CHEBI:37565"/>
    </ligand>
</feature>
<feature type="binding site" evidence="1">
    <location>
        <begin position="135"/>
        <end position="138"/>
    </location>
    <ligand>
        <name>GTP</name>
        <dbReference type="ChEBI" id="CHEBI:37565"/>
    </ligand>
</feature>
<organism>
    <name type="scientific">Streptococcus suis (strain 05ZYH33)</name>
    <dbReference type="NCBI Taxonomy" id="391295"/>
    <lineage>
        <taxon>Bacteria</taxon>
        <taxon>Bacillati</taxon>
        <taxon>Bacillota</taxon>
        <taxon>Bacilli</taxon>
        <taxon>Lactobacillales</taxon>
        <taxon>Streptococcaceae</taxon>
        <taxon>Streptococcus</taxon>
    </lineage>
</organism>
<keyword id="KW-0963">Cytoplasm</keyword>
<keyword id="KW-0251">Elongation factor</keyword>
<keyword id="KW-0342">GTP-binding</keyword>
<keyword id="KW-0547">Nucleotide-binding</keyword>
<keyword id="KW-0648">Protein biosynthesis</keyword>
<proteinExistence type="inferred from homology"/>
<evidence type="ECO:0000255" key="1">
    <source>
        <dbReference type="HAMAP-Rule" id="MF_00054"/>
    </source>
</evidence>
<reference key="1">
    <citation type="journal article" date="2007" name="PLoS ONE">
        <title>A glimpse of streptococcal toxic shock syndrome from comparative genomics of S. suis 2 Chinese isolates.</title>
        <authorList>
            <person name="Chen C."/>
            <person name="Tang J."/>
            <person name="Dong W."/>
            <person name="Wang C."/>
            <person name="Feng Y."/>
            <person name="Wang J."/>
            <person name="Zheng F."/>
            <person name="Pan X."/>
            <person name="Liu D."/>
            <person name="Li M."/>
            <person name="Song Y."/>
            <person name="Zhu X."/>
            <person name="Sun H."/>
            <person name="Feng T."/>
            <person name="Guo Z."/>
            <person name="Ju A."/>
            <person name="Ge J."/>
            <person name="Dong Y."/>
            <person name="Sun W."/>
            <person name="Jiang Y."/>
            <person name="Wang J."/>
            <person name="Yan J."/>
            <person name="Yang H."/>
            <person name="Wang X."/>
            <person name="Gao G.F."/>
            <person name="Yang R."/>
            <person name="Wang J."/>
            <person name="Yu J."/>
        </authorList>
    </citation>
    <scope>NUCLEOTIDE SEQUENCE [LARGE SCALE GENOMIC DNA]</scope>
    <source>
        <strain>05ZYH33</strain>
    </source>
</reference>
<name>EFG_STRSY</name>
<protein>
    <recommendedName>
        <fullName evidence="1">Elongation factor G</fullName>
        <shortName evidence="1">EF-G</shortName>
    </recommendedName>
</protein>
<comment type="function">
    <text evidence="1">Catalyzes the GTP-dependent ribosomal translocation step during translation elongation. During this step, the ribosome changes from the pre-translocational (PRE) to the post-translocational (POST) state as the newly formed A-site-bound peptidyl-tRNA and P-site-bound deacylated tRNA move to the P and E sites, respectively. Catalyzes the coordinated movement of the two tRNA molecules, the mRNA and conformational changes in the ribosome.</text>
</comment>
<comment type="subcellular location">
    <subcellularLocation>
        <location evidence="1">Cytoplasm</location>
    </subcellularLocation>
</comment>
<comment type="similarity">
    <text evidence="1">Belongs to the TRAFAC class translation factor GTPase superfamily. Classic translation factor GTPase family. EF-G/EF-2 subfamily.</text>
</comment>
<accession>A4VSN3</accession>
<sequence length="693" mass="76711">MAREFSLEKTRNIGIMAHVDAGKTTTTERILYYTGKIHKIGETHEGASQMDWMEQEQERGITITSAATTAQWNNHRVNIIDTPGHVDFTIEVQRSLRVLDGAVTVLDSQSGVEPQTETVWRQATEYGVPRIVFANKMDKIGADFLYSVSTLHERLQANAHPIQLPIGSEDEFRGIIDLIKMKAEIYTNDLGTDILEEDIPAEYLEQAEEYREKLVEAVAETDEELMMKYLEGEEITNDELKAAIRKATINVEFFPVLCGSAFKNKGVQLMLDAVIDYLPSPLDIPAIKGVNPDTDAEEERHASDEEPFAALAFKIMTDPFVGRLTFFRVYSGVLNSGSYVLNTSKGKRERIGRILQMHANSRQEIETVYAGDIAAAVGLKDTTTGDSLTDEKAKIILESIHVPEPVIQLMVEPKSKADQDKMGIALSKLAEEDPTFRVETNVETGETVISGMGELHLDVLVDRMRREFKVEANVGAPQVSYRETFRASTQARGFFKRQSGGKGQFGDVWIEFTPNEEGKGFEFENAIVGGVVPREFIPAVEKGLVESMANGVLAGYPIVDVKAKLYDGSYHDVDSSETAFKVAASLALKEAAKSAQPTILEPMMLVTITAPEDNLGDVMGHVTARRGRVDGMEARGNTQIVRAYVPLAEMFGYATVLRSATQGRGTFMMVFDHYEDVPKSVQDEIIKKNGGNA</sequence>